<organism>
    <name type="scientific">Desulfovibrio desulfuricans (strain ATCC 27774 / DSM 6949 / MB)</name>
    <dbReference type="NCBI Taxonomy" id="525146"/>
    <lineage>
        <taxon>Bacteria</taxon>
        <taxon>Pseudomonadati</taxon>
        <taxon>Thermodesulfobacteriota</taxon>
        <taxon>Desulfovibrionia</taxon>
        <taxon>Desulfovibrionales</taxon>
        <taxon>Desulfovibrionaceae</taxon>
        <taxon>Desulfovibrio</taxon>
    </lineage>
</organism>
<feature type="chain" id="PRO_0000381885" description="Polyribonucleotide nucleotidyltransferase">
    <location>
        <begin position="1"/>
        <end position="743"/>
    </location>
</feature>
<feature type="domain" description="KH" evidence="1">
    <location>
        <begin position="561"/>
        <end position="620"/>
    </location>
</feature>
<feature type="domain" description="S1 motif" evidence="1">
    <location>
        <begin position="630"/>
        <end position="704"/>
    </location>
</feature>
<feature type="region of interest" description="Disordered" evidence="2">
    <location>
        <begin position="702"/>
        <end position="743"/>
    </location>
</feature>
<feature type="compositionally biased region" description="Basic and acidic residues" evidence="2">
    <location>
        <begin position="712"/>
        <end position="743"/>
    </location>
</feature>
<feature type="binding site" evidence="1">
    <location>
        <position position="494"/>
    </location>
    <ligand>
        <name>Mg(2+)</name>
        <dbReference type="ChEBI" id="CHEBI:18420"/>
    </ligand>
</feature>
<feature type="binding site" evidence="1">
    <location>
        <position position="500"/>
    </location>
    <ligand>
        <name>Mg(2+)</name>
        <dbReference type="ChEBI" id="CHEBI:18420"/>
    </ligand>
</feature>
<proteinExistence type="inferred from homology"/>
<name>PNP_DESDA</name>
<reference key="1">
    <citation type="submission" date="2009-01" db="EMBL/GenBank/DDBJ databases">
        <title>Complete sequence of Desulfovibrio desulfuricans subsp. desulfuricans str. ATCC 27774.</title>
        <authorList>
            <consortium name="US DOE Joint Genome Institute"/>
            <person name="Lucas S."/>
            <person name="Copeland A."/>
            <person name="Lapidus A."/>
            <person name="Glavina del Rio T."/>
            <person name="Tice H."/>
            <person name="Bruce D."/>
            <person name="Goodwin L."/>
            <person name="Pitluck S."/>
            <person name="Sims D."/>
            <person name="Lu M."/>
            <person name="Kiss H."/>
            <person name="Meineke L."/>
            <person name="Brettin T."/>
            <person name="Detter J.C."/>
            <person name="Han C."/>
            <person name="Larimer F."/>
            <person name="Land M."/>
            <person name="Hauser L."/>
            <person name="Kyrpides N."/>
            <person name="Ovchinnikova G."/>
            <person name="Hazen T.C."/>
        </authorList>
    </citation>
    <scope>NUCLEOTIDE SEQUENCE [LARGE SCALE GENOMIC DNA]</scope>
    <source>
        <strain>ATCC 27774 / DSM 6949 / MB</strain>
    </source>
</reference>
<protein>
    <recommendedName>
        <fullName evidence="1">Polyribonucleotide nucleotidyltransferase</fullName>
        <ecNumber evidence="1">2.7.7.8</ecNumber>
    </recommendedName>
    <alternativeName>
        <fullName evidence="1">Polynucleotide phosphorylase</fullName>
        <shortName evidence="1">PNPase</shortName>
    </alternativeName>
</protein>
<keyword id="KW-0963">Cytoplasm</keyword>
<keyword id="KW-0460">Magnesium</keyword>
<keyword id="KW-0479">Metal-binding</keyword>
<keyword id="KW-0548">Nucleotidyltransferase</keyword>
<keyword id="KW-0694">RNA-binding</keyword>
<keyword id="KW-0808">Transferase</keyword>
<accession>B8J1X9</accession>
<sequence>MSQDIFTPTRVTCQVGGKEIIIESGRMANQAHGEVWIQCGGTVVLVTVCSQPLEFDKGFFPLTVEYSEKMYAAGRIPGSFFRREIGRPSERETLVARLIDRPIRPLFPKGLNEDVQVLASVISADQENESDVLALTGASAALMLSPLPFEGPVAGGRIARVGGQFVLNPTFEQQAQSDLNIVFAASGDALTMVEGDARFISEDVIIEALEWGRLQILPLVEIQHKLRELCGKPKMNFTPHQDDEALVACVHELALANGMEEALRVPEKMARKDARKAVKDKVMETLKADPAWAENEAALKAVSDILGGLEKKLVRARIVNEGTRIDGRDTTTVRPIQIQTGLLPRAHGSALFRRGETKSLVVATLGSSTDEQRMDSLTGDVTKRFMLHYNFPPFSVGEVKPVRVSRREIGHGALAEKSLRPVLPADADFPFTLRVVAETMESNGSSSMAAVCGGSLSLMDAGVPVSAPVAGVAMGLIKEGEKFIVLTDILGDEDALGDMDFKIAGTAEGVTGVQMDIKITGLTTEIMRTAMQQAREGRLHILEEMAKAIASPRKELSRYAPQHAEVFVNPDIIRLIIGPGGKNIKAITAATGASVDIEDSGRVSIFAPTAEALEKAREMVSYYDQRPDLGKNYNAKVRKIMEIGAIVEVLPNVEALVHVSQLDVNRVEQPGDVARLGEDMLVKVIEINGDRIRASRKAVLLEEQGHPWNPEDTARPQRSDRGDRGDRRGDRGGRDRRDRGDRR</sequence>
<comment type="function">
    <text evidence="1">Involved in mRNA degradation. Catalyzes the phosphorolysis of single-stranded polyribonucleotides processively in the 3'- to 5'-direction.</text>
</comment>
<comment type="catalytic activity">
    <reaction evidence="1">
        <text>RNA(n+1) + phosphate = RNA(n) + a ribonucleoside 5'-diphosphate</text>
        <dbReference type="Rhea" id="RHEA:22096"/>
        <dbReference type="Rhea" id="RHEA-COMP:14527"/>
        <dbReference type="Rhea" id="RHEA-COMP:17342"/>
        <dbReference type="ChEBI" id="CHEBI:43474"/>
        <dbReference type="ChEBI" id="CHEBI:57930"/>
        <dbReference type="ChEBI" id="CHEBI:140395"/>
        <dbReference type="EC" id="2.7.7.8"/>
    </reaction>
</comment>
<comment type="cofactor">
    <cofactor evidence="1">
        <name>Mg(2+)</name>
        <dbReference type="ChEBI" id="CHEBI:18420"/>
    </cofactor>
</comment>
<comment type="subcellular location">
    <subcellularLocation>
        <location evidence="1">Cytoplasm</location>
    </subcellularLocation>
</comment>
<comment type="similarity">
    <text evidence="1">Belongs to the polyribonucleotide nucleotidyltransferase family.</text>
</comment>
<evidence type="ECO:0000255" key="1">
    <source>
        <dbReference type="HAMAP-Rule" id="MF_01595"/>
    </source>
</evidence>
<evidence type="ECO:0000256" key="2">
    <source>
        <dbReference type="SAM" id="MobiDB-lite"/>
    </source>
</evidence>
<gene>
    <name evidence="1" type="primary">pnp</name>
    <name type="ordered locus">Ddes_0054</name>
</gene>
<dbReference type="EC" id="2.7.7.8" evidence="1"/>
<dbReference type="EMBL" id="CP001358">
    <property type="protein sequence ID" value="ACL47974.1"/>
    <property type="molecule type" value="Genomic_DNA"/>
</dbReference>
<dbReference type="SMR" id="B8J1X9"/>
<dbReference type="STRING" id="525146.Ddes_0054"/>
<dbReference type="KEGG" id="dds:Ddes_0054"/>
<dbReference type="eggNOG" id="COG1185">
    <property type="taxonomic scope" value="Bacteria"/>
</dbReference>
<dbReference type="HOGENOM" id="CLU_004217_2_2_7"/>
<dbReference type="GO" id="GO:0005829">
    <property type="term" value="C:cytosol"/>
    <property type="evidence" value="ECO:0007669"/>
    <property type="project" value="TreeGrafter"/>
</dbReference>
<dbReference type="GO" id="GO:0000175">
    <property type="term" value="F:3'-5'-RNA exonuclease activity"/>
    <property type="evidence" value="ECO:0007669"/>
    <property type="project" value="TreeGrafter"/>
</dbReference>
<dbReference type="GO" id="GO:0000287">
    <property type="term" value="F:magnesium ion binding"/>
    <property type="evidence" value="ECO:0007669"/>
    <property type="project" value="UniProtKB-UniRule"/>
</dbReference>
<dbReference type="GO" id="GO:0004654">
    <property type="term" value="F:polyribonucleotide nucleotidyltransferase activity"/>
    <property type="evidence" value="ECO:0007669"/>
    <property type="project" value="UniProtKB-UniRule"/>
</dbReference>
<dbReference type="GO" id="GO:0003723">
    <property type="term" value="F:RNA binding"/>
    <property type="evidence" value="ECO:0007669"/>
    <property type="project" value="UniProtKB-UniRule"/>
</dbReference>
<dbReference type="GO" id="GO:0006402">
    <property type="term" value="P:mRNA catabolic process"/>
    <property type="evidence" value="ECO:0007669"/>
    <property type="project" value="UniProtKB-UniRule"/>
</dbReference>
<dbReference type="GO" id="GO:0006396">
    <property type="term" value="P:RNA processing"/>
    <property type="evidence" value="ECO:0007669"/>
    <property type="project" value="InterPro"/>
</dbReference>
<dbReference type="CDD" id="cd02393">
    <property type="entry name" value="KH-I_PNPase"/>
    <property type="match status" value="1"/>
</dbReference>
<dbReference type="CDD" id="cd11363">
    <property type="entry name" value="RNase_PH_PNPase_1"/>
    <property type="match status" value="1"/>
</dbReference>
<dbReference type="CDD" id="cd11364">
    <property type="entry name" value="RNase_PH_PNPase_2"/>
    <property type="match status" value="1"/>
</dbReference>
<dbReference type="FunFam" id="3.30.1370.10:FF:000001">
    <property type="entry name" value="Polyribonucleotide nucleotidyltransferase"/>
    <property type="match status" value="1"/>
</dbReference>
<dbReference type="FunFam" id="3.30.230.70:FF:000001">
    <property type="entry name" value="Polyribonucleotide nucleotidyltransferase"/>
    <property type="match status" value="1"/>
</dbReference>
<dbReference type="FunFam" id="3.30.230.70:FF:000002">
    <property type="entry name" value="Polyribonucleotide nucleotidyltransferase"/>
    <property type="match status" value="1"/>
</dbReference>
<dbReference type="Gene3D" id="3.30.230.70">
    <property type="entry name" value="GHMP Kinase, N-terminal domain"/>
    <property type="match status" value="2"/>
</dbReference>
<dbReference type="Gene3D" id="3.30.1370.10">
    <property type="entry name" value="K Homology domain, type 1"/>
    <property type="match status" value="1"/>
</dbReference>
<dbReference type="Gene3D" id="2.40.50.140">
    <property type="entry name" value="Nucleic acid-binding proteins"/>
    <property type="match status" value="1"/>
</dbReference>
<dbReference type="HAMAP" id="MF_01595">
    <property type="entry name" value="PNPase"/>
    <property type="match status" value="1"/>
</dbReference>
<dbReference type="InterPro" id="IPR001247">
    <property type="entry name" value="ExoRNase_PH_dom1"/>
</dbReference>
<dbReference type="InterPro" id="IPR015847">
    <property type="entry name" value="ExoRNase_PH_dom2"/>
</dbReference>
<dbReference type="InterPro" id="IPR036345">
    <property type="entry name" value="ExoRNase_PH_dom2_sf"/>
</dbReference>
<dbReference type="InterPro" id="IPR004087">
    <property type="entry name" value="KH_dom"/>
</dbReference>
<dbReference type="InterPro" id="IPR004088">
    <property type="entry name" value="KH_dom_type_1"/>
</dbReference>
<dbReference type="InterPro" id="IPR036612">
    <property type="entry name" value="KH_dom_type_1_sf"/>
</dbReference>
<dbReference type="InterPro" id="IPR012340">
    <property type="entry name" value="NA-bd_OB-fold"/>
</dbReference>
<dbReference type="InterPro" id="IPR012162">
    <property type="entry name" value="PNPase"/>
</dbReference>
<dbReference type="InterPro" id="IPR027408">
    <property type="entry name" value="PNPase/RNase_PH_dom_sf"/>
</dbReference>
<dbReference type="InterPro" id="IPR015848">
    <property type="entry name" value="PNPase_PH_RNA-bd_bac/org-type"/>
</dbReference>
<dbReference type="InterPro" id="IPR020568">
    <property type="entry name" value="Ribosomal_Su5_D2-typ_SF"/>
</dbReference>
<dbReference type="InterPro" id="IPR003029">
    <property type="entry name" value="S1_domain"/>
</dbReference>
<dbReference type="NCBIfam" id="TIGR03591">
    <property type="entry name" value="polynuc_phos"/>
    <property type="match status" value="1"/>
</dbReference>
<dbReference type="NCBIfam" id="NF008805">
    <property type="entry name" value="PRK11824.1"/>
    <property type="match status" value="1"/>
</dbReference>
<dbReference type="PANTHER" id="PTHR11252">
    <property type="entry name" value="POLYRIBONUCLEOTIDE NUCLEOTIDYLTRANSFERASE"/>
    <property type="match status" value="1"/>
</dbReference>
<dbReference type="PANTHER" id="PTHR11252:SF0">
    <property type="entry name" value="POLYRIBONUCLEOTIDE NUCLEOTIDYLTRANSFERASE 1, MITOCHONDRIAL"/>
    <property type="match status" value="1"/>
</dbReference>
<dbReference type="Pfam" id="PF00013">
    <property type="entry name" value="KH_1"/>
    <property type="match status" value="1"/>
</dbReference>
<dbReference type="Pfam" id="PF03726">
    <property type="entry name" value="PNPase"/>
    <property type="match status" value="1"/>
</dbReference>
<dbReference type="Pfam" id="PF01138">
    <property type="entry name" value="RNase_PH"/>
    <property type="match status" value="2"/>
</dbReference>
<dbReference type="Pfam" id="PF03725">
    <property type="entry name" value="RNase_PH_C"/>
    <property type="match status" value="2"/>
</dbReference>
<dbReference type="Pfam" id="PF00575">
    <property type="entry name" value="S1"/>
    <property type="match status" value="1"/>
</dbReference>
<dbReference type="PIRSF" id="PIRSF005499">
    <property type="entry name" value="PNPase"/>
    <property type="match status" value="1"/>
</dbReference>
<dbReference type="SMART" id="SM00322">
    <property type="entry name" value="KH"/>
    <property type="match status" value="1"/>
</dbReference>
<dbReference type="SMART" id="SM00316">
    <property type="entry name" value="S1"/>
    <property type="match status" value="1"/>
</dbReference>
<dbReference type="SUPFAM" id="SSF54791">
    <property type="entry name" value="Eukaryotic type KH-domain (KH-domain type I)"/>
    <property type="match status" value="1"/>
</dbReference>
<dbReference type="SUPFAM" id="SSF50249">
    <property type="entry name" value="Nucleic acid-binding proteins"/>
    <property type="match status" value="1"/>
</dbReference>
<dbReference type="SUPFAM" id="SSF55666">
    <property type="entry name" value="Ribonuclease PH domain 2-like"/>
    <property type="match status" value="2"/>
</dbReference>
<dbReference type="SUPFAM" id="SSF54211">
    <property type="entry name" value="Ribosomal protein S5 domain 2-like"/>
    <property type="match status" value="2"/>
</dbReference>
<dbReference type="PROSITE" id="PS50084">
    <property type="entry name" value="KH_TYPE_1"/>
    <property type="match status" value="1"/>
</dbReference>
<dbReference type="PROSITE" id="PS50126">
    <property type="entry name" value="S1"/>
    <property type="match status" value="1"/>
</dbReference>